<comment type="function">
    <text evidence="1">Releases the supercoiling and torsional tension of DNA introduced during the DNA replication and transcription by transiently cleaving and rejoining one strand of the DNA duplex. Introduces a single-strand break via transesterification at the specific target site 5'-[CT]CCTTp site in duplex DNA. The scissile phosphodiester is attacked by the catalytic tyrosine of the enzyme, resulting in the formation of a DNA-(3'-phosphotyrosyl)-enzyme intermediate and the expulsion of a 5'-OH DNA strand. The free DNA strand then undergoes passage around the unbroken strand thus removing DNA supercoils. Finally, in the religation step, the DNA 5'-OH attacks the covalent intermediate to expel the active-site tyrosine and restore the DNA phosphodiester backbone.</text>
</comment>
<comment type="catalytic activity">
    <reaction evidence="3">
        <text>ATP-independent breakage of single-stranded DNA, followed by passage and rejoining.</text>
        <dbReference type="EC" id="5.6.2.1"/>
    </reaction>
</comment>
<comment type="subcellular location">
    <subcellularLocation>
        <location evidence="1">Virion</location>
    </subcellularLocation>
</comment>
<comment type="induction">
    <text>Expressed in the late phase of the viral replicative cycle.</text>
</comment>
<comment type="similarity">
    <text evidence="4">Belongs to the type IB topoisomerase family.</text>
</comment>
<protein>
    <recommendedName>
        <fullName>DNA topoisomerase I</fullName>
        <ecNumber>5.6.2.1</ecNumber>
    </recommendedName>
    <alternativeName>
        <fullName>DNA topoisomerase 1</fullName>
    </alternativeName>
</protein>
<accession>A0A7H0DN83</accession>
<organismHost>
    <name type="scientific">Cynomys gunnisoni</name>
    <name type="common">Gunnison's prairie dog</name>
    <name type="synonym">Spermophilus gunnisoni</name>
    <dbReference type="NCBI Taxonomy" id="45479"/>
</organismHost>
<organismHost>
    <name type="scientific">Cynomys leucurus</name>
    <name type="common">White-tailed prairie dog</name>
    <dbReference type="NCBI Taxonomy" id="99825"/>
</organismHost>
<organismHost>
    <name type="scientific">Cynomys ludovicianus</name>
    <name type="common">Black-tailed prairie dog</name>
    <dbReference type="NCBI Taxonomy" id="45480"/>
</organismHost>
<organismHost>
    <name type="scientific">Cynomys mexicanus</name>
    <name type="common">Mexican prairie dog</name>
    <dbReference type="NCBI Taxonomy" id="99826"/>
</organismHost>
<organismHost>
    <name type="scientific">Cynomys parvidens</name>
    <name type="common">Utah prairie dog</name>
    <dbReference type="NCBI Taxonomy" id="99827"/>
</organismHost>
<organismHost>
    <name type="scientific">Gliridae</name>
    <name type="common">dormice</name>
    <dbReference type="NCBI Taxonomy" id="30650"/>
</organismHost>
<organismHost>
    <name type="scientific">Heliosciurus ruwenzorii</name>
    <name type="common">Ruwenzori sun squirrel</name>
    <dbReference type="NCBI Taxonomy" id="226685"/>
</organismHost>
<organismHost>
    <name type="scientific">Homo sapiens</name>
    <name type="common">Human</name>
    <dbReference type="NCBI Taxonomy" id="9606"/>
</organismHost>
<organismHost>
    <name type="scientific">Mus musculus</name>
    <name type="common">Mouse</name>
    <dbReference type="NCBI Taxonomy" id="10090"/>
</organismHost>
<proteinExistence type="evidence at transcript level"/>
<dbReference type="EC" id="5.6.2.1"/>
<dbReference type="EMBL" id="MT903340">
    <property type="protein sequence ID" value="QNP12966.1"/>
    <property type="molecule type" value="Genomic_DNA"/>
</dbReference>
<dbReference type="RefSeq" id="YP_010377093.1">
    <property type="nucleotide sequence ID" value="NC_063383.1"/>
</dbReference>
<dbReference type="SMR" id="A0A7H0DN83"/>
<dbReference type="GeneID" id="72551506"/>
<dbReference type="Proteomes" id="UP000516359">
    <property type="component" value="Genome"/>
</dbReference>
<dbReference type="GO" id="GO:0044423">
    <property type="term" value="C:virion component"/>
    <property type="evidence" value="ECO:0007669"/>
    <property type="project" value="UniProtKB-KW"/>
</dbReference>
<dbReference type="GO" id="GO:0003677">
    <property type="term" value="F:DNA binding"/>
    <property type="evidence" value="ECO:0007669"/>
    <property type="project" value="UniProtKB-KW"/>
</dbReference>
<dbReference type="GO" id="GO:0003917">
    <property type="term" value="F:DNA topoisomerase type I (single strand cut, ATP-independent) activity"/>
    <property type="evidence" value="ECO:0007669"/>
    <property type="project" value="InterPro"/>
</dbReference>
<dbReference type="GO" id="GO:0006265">
    <property type="term" value="P:DNA topological change"/>
    <property type="evidence" value="ECO:0007669"/>
    <property type="project" value="InterPro"/>
</dbReference>
<dbReference type="CDD" id="cd00659">
    <property type="entry name" value="Topo_IB_C"/>
    <property type="match status" value="1"/>
</dbReference>
<dbReference type="Gene3D" id="3.30.66.10">
    <property type="entry name" value="DNA topoisomerase I domain"/>
    <property type="match status" value="1"/>
</dbReference>
<dbReference type="Gene3D" id="3.90.15.10">
    <property type="entry name" value="Topoisomerase I, Chain A, domain 3"/>
    <property type="match status" value="1"/>
</dbReference>
<dbReference type="InterPro" id="IPR011010">
    <property type="entry name" value="DNA_brk_join_enz"/>
</dbReference>
<dbReference type="InterPro" id="IPR035447">
    <property type="entry name" value="DNA_topo_I_N_sf"/>
</dbReference>
<dbReference type="InterPro" id="IPR001631">
    <property type="entry name" value="TopoI"/>
</dbReference>
<dbReference type="InterPro" id="IPR014711">
    <property type="entry name" value="TopoI_cat_a-hlx-sub_euk"/>
</dbReference>
<dbReference type="InterPro" id="IPR013500">
    <property type="entry name" value="TopoI_cat_euk"/>
</dbReference>
<dbReference type="InterPro" id="IPR015346">
    <property type="entry name" value="TopoI_N_vir"/>
</dbReference>
<dbReference type="InterPro" id="IPR018521">
    <property type="entry name" value="TopoIB_AS"/>
</dbReference>
<dbReference type="Pfam" id="PF01028">
    <property type="entry name" value="Topoisom_I"/>
    <property type="match status" value="1"/>
</dbReference>
<dbReference type="Pfam" id="PF09266">
    <property type="entry name" value="VirDNA-topo-I_N"/>
    <property type="match status" value="1"/>
</dbReference>
<dbReference type="PRINTS" id="PR00416">
    <property type="entry name" value="EUTPISMRASEI"/>
</dbReference>
<dbReference type="SUPFAM" id="SSF56349">
    <property type="entry name" value="DNA breaking-rejoining enzymes"/>
    <property type="match status" value="1"/>
</dbReference>
<dbReference type="SUPFAM" id="SSF55869">
    <property type="entry name" value="DNA topoisomerase I domain"/>
    <property type="match status" value="1"/>
</dbReference>
<dbReference type="PROSITE" id="PS00176">
    <property type="entry name" value="TOPO_IB_1"/>
    <property type="match status" value="1"/>
</dbReference>
<dbReference type="PROSITE" id="PS52038">
    <property type="entry name" value="TOPO_IB_2"/>
    <property type="match status" value="1"/>
</dbReference>
<evidence type="ECO:0000250" key="1">
    <source>
        <dbReference type="UniProtKB" id="P68698"/>
    </source>
</evidence>
<evidence type="ECO:0000255" key="2">
    <source>
        <dbReference type="PROSITE-ProRule" id="PRU01382"/>
    </source>
</evidence>
<evidence type="ECO:0000255" key="3">
    <source>
        <dbReference type="RuleBase" id="RU365101"/>
    </source>
</evidence>
<evidence type="ECO:0000305" key="4"/>
<feature type="chain" id="PRO_0000457426" description="DNA topoisomerase I">
    <location>
        <begin position="1"/>
        <end position="314"/>
    </location>
</feature>
<feature type="domain" description="Topo IB-type catalytic" evidence="2">
    <location>
        <begin position="77"/>
        <end position="314"/>
    </location>
</feature>
<feature type="active site" description="O-(3'-phospho-DNA)-tyrosine intermediate" evidence="2">
    <location>
        <position position="274"/>
    </location>
</feature>
<gene>
    <name type="primary">OPG111</name>
    <name type="synonym">TOP1</name>
    <name type="ORF">MPXVgp096</name>
</gene>
<sequence length="314" mass="36666">MRALFYKDGKLFTDNNFLNPVSDDNPAYEVLQHVKIPTHLTDVVVYEQTWEEALTRLIFVGSDSKGRRQYFYGKMHIQNRNAKRDRIFVRVYNVMKRINCFINKNIKKSSTDSNYQLAVFMLMETMFFIRFGKMKYLKENETVGLLTLKNKHIEISPDEIVIKFVGKDKVSHEFVVHKSNRLYKPLLKLTDDSSPEEFLFNKLSERKVYECIKQFGIRIKDLRTYGVNYTFLYNFWTNVKSVSPLPSPKKLIALTIKQTAEVVGHTPSISKRAYMATTILEMVKDKNFLDVVSKTTFDEFLSIVVDHVKSSTDG</sequence>
<name>TOP1_MONPV</name>
<keyword id="KW-0238">DNA-binding</keyword>
<keyword id="KW-0413">Isomerase</keyword>
<keyword id="KW-0426">Late protein</keyword>
<keyword id="KW-1185">Reference proteome</keyword>
<keyword id="KW-0799">Topoisomerase</keyword>
<keyword id="KW-0946">Virion</keyword>
<organism>
    <name type="scientific">Monkeypox virus</name>
    <dbReference type="NCBI Taxonomy" id="10244"/>
    <lineage>
        <taxon>Viruses</taxon>
        <taxon>Varidnaviria</taxon>
        <taxon>Bamfordvirae</taxon>
        <taxon>Nucleocytoviricota</taxon>
        <taxon>Pokkesviricetes</taxon>
        <taxon>Chitovirales</taxon>
        <taxon>Poxviridae</taxon>
        <taxon>Chordopoxvirinae</taxon>
        <taxon>Orthopoxvirus</taxon>
    </lineage>
</organism>
<reference key="1">
    <citation type="journal article" date="2022" name="J. Infect. Dis.">
        <title>Exportation of Monkeypox virus from the African continent.</title>
        <authorList>
            <person name="Mauldin M.R."/>
            <person name="McCollum A.M."/>
            <person name="Nakazawa Y.J."/>
            <person name="Mandra A."/>
            <person name="Whitehouse E.R."/>
            <person name="Davidson W."/>
            <person name="Zhao H."/>
            <person name="Gao J."/>
            <person name="Li Y."/>
            <person name="Doty J."/>
            <person name="Yinka-Ogunleye A."/>
            <person name="Akinpelu A."/>
            <person name="Aruna O."/>
            <person name="Naidoo D."/>
            <person name="Lewandowski K."/>
            <person name="Afrough B."/>
            <person name="Graham V."/>
            <person name="Aarons E."/>
            <person name="Hewson R."/>
            <person name="Vipond R."/>
            <person name="Dunning J."/>
            <person name="Chand M."/>
            <person name="Brown C."/>
            <person name="Cohen-Gihon I."/>
            <person name="Erez N."/>
            <person name="Shifman O."/>
            <person name="Israeli O."/>
            <person name="Sharon M."/>
            <person name="Schwartz E."/>
            <person name="Beth-Din A."/>
            <person name="Zvi A."/>
            <person name="Mak T.M."/>
            <person name="Ng Y.K."/>
            <person name="Cui L."/>
            <person name="Lin R.T.P."/>
            <person name="Olson V.A."/>
            <person name="Brooks T."/>
            <person name="Paran N."/>
            <person name="Ihekweazu C."/>
            <person name="Reynolds M.G."/>
        </authorList>
    </citation>
    <scope>NUCLEOTIDE SEQUENCE [LARGE SCALE GENOMIC DNA]</scope>
    <source>
        <strain>MPXV-M5312_HM12_Rivers</strain>
    </source>
</reference>